<accession>A1VZU4</accession>
<feature type="chain" id="PRO_1000018870" description="Bifunctional purine biosynthesis protein PurH">
    <location>
        <begin position="1"/>
        <end position="510"/>
    </location>
</feature>
<feature type="domain" description="MGS-like" evidence="2">
    <location>
        <begin position="1"/>
        <end position="142"/>
    </location>
</feature>
<sequence length="510" mass="56402">MRALLSVSDKEGIVEFGKELENLGFEILSTGGTFKLLKENGIKVIEVSDFTKSPELFEGRVKTLHPKIHGGILHKRSDENHIKQAKENEILGIDLVCVNLYPFKKTTIMSDDFDEIIENIDIGGPAMIRSAAKNYKDVMVLCDPLDYEKVIETLKKGQNDENFRLNLMIKAYEHTANYDAYIANYMNERFNGGFGASKFIVGQKVFDTKYGENPHQKGALYEFDAFFSANFKALKGEASFNNLTDINAALNLASSFDKAPAIAIVKHGNPCGFAIKENLVQSYIHALKCDSVSAYGGVVAINGTLDEALANKINEIYVEVIIAANVDEKALAVFEGKKRIKIFTQESPFLIRSFDKYDFKHIDGGFVYQNSDEVGEDELKNAKLMSQREASKEELKDLEIAMKIAAFTKSNNVVYVKNGAMVAIGMGMTSRIDAAKAAIAKAKEMGLDLQGCVLASEAFFPFRDSIDEASKVGVKAIVEPGGSIRDDEVVKAADEYGMALYFTGVRHFLH</sequence>
<name>PUR9_CAMJJ</name>
<comment type="catalytic activity">
    <reaction evidence="1">
        <text>(6R)-10-formyltetrahydrofolate + 5-amino-1-(5-phospho-beta-D-ribosyl)imidazole-4-carboxamide = 5-formamido-1-(5-phospho-D-ribosyl)imidazole-4-carboxamide + (6S)-5,6,7,8-tetrahydrofolate</text>
        <dbReference type="Rhea" id="RHEA:22192"/>
        <dbReference type="ChEBI" id="CHEBI:57453"/>
        <dbReference type="ChEBI" id="CHEBI:58467"/>
        <dbReference type="ChEBI" id="CHEBI:58475"/>
        <dbReference type="ChEBI" id="CHEBI:195366"/>
        <dbReference type="EC" id="2.1.2.3"/>
    </reaction>
</comment>
<comment type="catalytic activity">
    <reaction evidence="1">
        <text>IMP + H2O = 5-formamido-1-(5-phospho-D-ribosyl)imidazole-4-carboxamide</text>
        <dbReference type="Rhea" id="RHEA:18445"/>
        <dbReference type="ChEBI" id="CHEBI:15377"/>
        <dbReference type="ChEBI" id="CHEBI:58053"/>
        <dbReference type="ChEBI" id="CHEBI:58467"/>
        <dbReference type="EC" id="3.5.4.10"/>
    </reaction>
</comment>
<comment type="pathway">
    <text evidence="1">Purine metabolism; IMP biosynthesis via de novo pathway; 5-formamido-1-(5-phospho-D-ribosyl)imidazole-4-carboxamide from 5-amino-1-(5-phospho-D-ribosyl)imidazole-4-carboxamide (10-formyl THF route): step 1/1.</text>
</comment>
<comment type="pathway">
    <text evidence="1">Purine metabolism; IMP biosynthesis via de novo pathway; IMP from 5-formamido-1-(5-phospho-D-ribosyl)imidazole-4-carboxamide: step 1/1.</text>
</comment>
<comment type="domain">
    <text evidence="1">The IMP cyclohydrolase activity resides in the N-terminal region.</text>
</comment>
<comment type="similarity">
    <text evidence="1">Belongs to the PurH family.</text>
</comment>
<gene>
    <name evidence="1" type="primary">purH</name>
    <name type="ordered locus">CJJ81176_0976</name>
</gene>
<keyword id="KW-0378">Hydrolase</keyword>
<keyword id="KW-0511">Multifunctional enzyme</keyword>
<keyword id="KW-0658">Purine biosynthesis</keyword>
<keyword id="KW-0808">Transferase</keyword>
<protein>
    <recommendedName>
        <fullName evidence="1">Bifunctional purine biosynthesis protein PurH</fullName>
    </recommendedName>
    <domain>
        <recommendedName>
            <fullName evidence="1">Phosphoribosylaminoimidazolecarboxamide formyltransferase</fullName>
            <ecNumber evidence="1">2.1.2.3</ecNumber>
        </recommendedName>
        <alternativeName>
            <fullName evidence="1">AICAR transformylase</fullName>
        </alternativeName>
    </domain>
    <domain>
        <recommendedName>
            <fullName evidence="1">IMP cyclohydrolase</fullName>
            <ecNumber evidence="1">3.5.4.10</ecNumber>
        </recommendedName>
        <alternativeName>
            <fullName evidence="1">ATIC</fullName>
        </alternativeName>
        <alternativeName>
            <fullName evidence="1">IMP synthase</fullName>
        </alternativeName>
        <alternativeName>
            <fullName evidence="1">Inosinicase</fullName>
        </alternativeName>
    </domain>
</protein>
<proteinExistence type="inferred from homology"/>
<evidence type="ECO:0000255" key="1">
    <source>
        <dbReference type="HAMAP-Rule" id="MF_00139"/>
    </source>
</evidence>
<evidence type="ECO:0000255" key="2">
    <source>
        <dbReference type="PROSITE-ProRule" id="PRU01202"/>
    </source>
</evidence>
<dbReference type="EC" id="2.1.2.3" evidence="1"/>
<dbReference type="EC" id="3.5.4.10" evidence="1"/>
<dbReference type="EMBL" id="CP000538">
    <property type="protein sequence ID" value="EAQ71866.1"/>
    <property type="molecule type" value="Genomic_DNA"/>
</dbReference>
<dbReference type="RefSeq" id="WP_002853339.1">
    <property type="nucleotide sequence ID" value="NC_008787.1"/>
</dbReference>
<dbReference type="SMR" id="A1VZU4"/>
<dbReference type="KEGG" id="cjj:CJJ81176_0976"/>
<dbReference type="eggNOG" id="COG0138">
    <property type="taxonomic scope" value="Bacteria"/>
</dbReference>
<dbReference type="HOGENOM" id="CLU_016316_5_2_7"/>
<dbReference type="UniPathway" id="UPA00074">
    <property type="reaction ID" value="UER00133"/>
</dbReference>
<dbReference type="UniPathway" id="UPA00074">
    <property type="reaction ID" value="UER00135"/>
</dbReference>
<dbReference type="Proteomes" id="UP000000646">
    <property type="component" value="Chromosome"/>
</dbReference>
<dbReference type="GO" id="GO:0005829">
    <property type="term" value="C:cytosol"/>
    <property type="evidence" value="ECO:0007669"/>
    <property type="project" value="TreeGrafter"/>
</dbReference>
<dbReference type="GO" id="GO:0003937">
    <property type="term" value="F:IMP cyclohydrolase activity"/>
    <property type="evidence" value="ECO:0007669"/>
    <property type="project" value="UniProtKB-UniRule"/>
</dbReference>
<dbReference type="GO" id="GO:0004643">
    <property type="term" value="F:phosphoribosylaminoimidazolecarboxamide formyltransferase activity"/>
    <property type="evidence" value="ECO:0007669"/>
    <property type="project" value="UniProtKB-UniRule"/>
</dbReference>
<dbReference type="GO" id="GO:0006189">
    <property type="term" value="P:'de novo' IMP biosynthetic process"/>
    <property type="evidence" value="ECO:0007669"/>
    <property type="project" value="UniProtKB-UniRule"/>
</dbReference>
<dbReference type="CDD" id="cd01421">
    <property type="entry name" value="IMPCH"/>
    <property type="match status" value="1"/>
</dbReference>
<dbReference type="FunFam" id="3.40.140.20:FF:000001">
    <property type="entry name" value="Bifunctional purine biosynthesis protein PurH"/>
    <property type="match status" value="1"/>
</dbReference>
<dbReference type="FunFam" id="3.40.50.1380:FF:000001">
    <property type="entry name" value="Bifunctional purine biosynthesis protein PurH"/>
    <property type="match status" value="1"/>
</dbReference>
<dbReference type="Gene3D" id="3.40.140.20">
    <property type="match status" value="2"/>
</dbReference>
<dbReference type="Gene3D" id="3.40.50.1380">
    <property type="entry name" value="Methylglyoxal synthase-like domain"/>
    <property type="match status" value="1"/>
</dbReference>
<dbReference type="HAMAP" id="MF_00139">
    <property type="entry name" value="PurH"/>
    <property type="match status" value="1"/>
</dbReference>
<dbReference type="InterPro" id="IPR024051">
    <property type="entry name" value="AICAR_Tfase_dup_dom_sf"/>
</dbReference>
<dbReference type="InterPro" id="IPR016193">
    <property type="entry name" value="Cytidine_deaminase-like"/>
</dbReference>
<dbReference type="InterPro" id="IPR011607">
    <property type="entry name" value="MGS-like_dom"/>
</dbReference>
<dbReference type="InterPro" id="IPR036914">
    <property type="entry name" value="MGS-like_dom_sf"/>
</dbReference>
<dbReference type="InterPro" id="IPR002695">
    <property type="entry name" value="PurH-like"/>
</dbReference>
<dbReference type="NCBIfam" id="NF002049">
    <property type="entry name" value="PRK00881.1"/>
    <property type="match status" value="1"/>
</dbReference>
<dbReference type="NCBIfam" id="TIGR00355">
    <property type="entry name" value="purH"/>
    <property type="match status" value="1"/>
</dbReference>
<dbReference type="PANTHER" id="PTHR11692:SF0">
    <property type="entry name" value="BIFUNCTIONAL PURINE BIOSYNTHESIS PROTEIN ATIC"/>
    <property type="match status" value="1"/>
</dbReference>
<dbReference type="PANTHER" id="PTHR11692">
    <property type="entry name" value="BIFUNCTIONAL PURINE BIOSYNTHESIS PROTEIN PURH"/>
    <property type="match status" value="1"/>
</dbReference>
<dbReference type="Pfam" id="PF01808">
    <property type="entry name" value="AICARFT_IMPCHas"/>
    <property type="match status" value="1"/>
</dbReference>
<dbReference type="Pfam" id="PF02142">
    <property type="entry name" value="MGS"/>
    <property type="match status" value="1"/>
</dbReference>
<dbReference type="PIRSF" id="PIRSF000414">
    <property type="entry name" value="AICARFT_IMPCHas"/>
    <property type="match status" value="1"/>
</dbReference>
<dbReference type="SMART" id="SM00798">
    <property type="entry name" value="AICARFT_IMPCHas"/>
    <property type="match status" value="1"/>
</dbReference>
<dbReference type="SMART" id="SM00851">
    <property type="entry name" value="MGS"/>
    <property type="match status" value="1"/>
</dbReference>
<dbReference type="SUPFAM" id="SSF53927">
    <property type="entry name" value="Cytidine deaminase-like"/>
    <property type="match status" value="1"/>
</dbReference>
<dbReference type="SUPFAM" id="SSF52335">
    <property type="entry name" value="Methylglyoxal synthase-like"/>
    <property type="match status" value="1"/>
</dbReference>
<dbReference type="PROSITE" id="PS51855">
    <property type="entry name" value="MGS"/>
    <property type="match status" value="1"/>
</dbReference>
<reference key="1">
    <citation type="submission" date="2006-12" db="EMBL/GenBank/DDBJ databases">
        <authorList>
            <person name="Fouts D.E."/>
            <person name="Nelson K.E."/>
            <person name="Sebastian Y."/>
        </authorList>
    </citation>
    <scope>NUCLEOTIDE SEQUENCE [LARGE SCALE GENOMIC DNA]</scope>
    <source>
        <strain>81-176</strain>
    </source>
</reference>
<organism>
    <name type="scientific">Campylobacter jejuni subsp. jejuni serotype O:23/36 (strain 81-176)</name>
    <dbReference type="NCBI Taxonomy" id="354242"/>
    <lineage>
        <taxon>Bacteria</taxon>
        <taxon>Pseudomonadati</taxon>
        <taxon>Campylobacterota</taxon>
        <taxon>Epsilonproteobacteria</taxon>
        <taxon>Campylobacterales</taxon>
        <taxon>Campylobacteraceae</taxon>
        <taxon>Campylobacter</taxon>
    </lineage>
</organism>